<proteinExistence type="inferred from homology"/>
<comment type="function">
    <text evidence="1">Catalyzes the NADPH-dependent rearrangement and reduction of 1-deoxy-D-xylulose-5-phosphate (DXP) to 2-C-methyl-D-erythritol 4-phosphate (MEP).</text>
</comment>
<comment type="catalytic activity">
    <reaction evidence="1">
        <text>2-C-methyl-D-erythritol 4-phosphate + NADP(+) = 1-deoxy-D-xylulose 5-phosphate + NADPH + H(+)</text>
        <dbReference type="Rhea" id="RHEA:13717"/>
        <dbReference type="ChEBI" id="CHEBI:15378"/>
        <dbReference type="ChEBI" id="CHEBI:57783"/>
        <dbReference type="ChEBI" id="CHEBI:57792"/>
        <dbReference type="ChEBI" id="CHEBI:58262"/>
        <dbReference type="ChEBI" id="CHEBI:58349"/>
        <dbReference type="EC" id="1.1.1.267"/>
    </reaction>
    <physiologicalReaction direction="right-to-left" evidence="1">
        <dbReference type="Rhea" id="RHEA:13719"/>
    </physiologicalReaction>
</comment>
<comment type="cofactor">
    <cofactor evidence="1">
        <name>Mg(2+)</name>
        <dbReference type="ChEBI" id="CHEBI:18420"/>
    </cofactor>
    <cofactor evidence="1">
        <name>Mn(2+)</name>
        <dbReference type="ChEBI" id="CHEBI:29035"/>
    </cofactor>
</comment>
<comment type="pathway">
    <text evidence="1">Isoprenoid biosynthesis; isopentenyl diphosphate biosynthesis via DXP pathway; isopentenyl diphosphate from 1-deoxy-D-xylulose 5-phosphate: step 1/6.</text>
</comment>
<comment type="similarity">
    <text evidence="1">Belongs to the DXR family.</text>
</comment>
<accession>A8FN24</accession>
<evidence type="ECO:0000255" key="1">
    <source>
        <dbReference type="HAMAP-Rule" id="MF_00183"/>
    </source>
</evidence>
<feature type="chain" id="PRO_1000071665" description="1-deoxy-D-xylulose 5-phosphate reductoisomerase">
    <location>
        <begin position="1"/>
        <end position="356"/>
    </location>
</feature>
<feature type="binding site" evidence="1">
    <location>
        <position position="7"/>
    </location>
    <ligand>
        <name>NADPH</name>
        <dbReference type="ChEBI" id="CHEBI:57783"/>
    </ligand>
</feature>
<feature type="binding site" evidence="1">
    <location>
        <position position="8"/>
    </location>
    <ligand>
        <name>NADPH</name>
        <dbReference type="ChEBI" id="CHEBI:57783"/>
    </ligand>
</feature>
<feature type="binding site" evidence="1">
    <location>
        <position position="9"/>
    </location>
    <ligand>
        <name>NADPH</name>
        <dbReference type="ChEBI" id="CHEBI:57783"/>
    </ligand>
</feature>
<feature type="binding site" evidence="1">
    <location>
        <position position="10"/>
    </location>
    <ligand>
        <name>NADPH</name>
        <dbReference type="ChEBI" id="CHEBI:57783"/>
    </ligand>
</feature>
<feature type="binding site" evidence="1">
    <location>
        <position position="31"/>
    </location>
    <ligand>
        <name>NADPH</name>
        <dbReference type="ChEBI" id="CHEBI:57783"/>
    </ligand>
</feature>
<feature type="binding site" evidence="1">
    <location>
        <position position="33"/>
    </location>
    <ligand>
        <name>NADPH</name>
        <dbReference type="ChEBI" id="CHEBI:57783"/>
    </ligand>
</feature>
<feature type="binding site" evidence="1">
    <location>
        <position position="111"/>
    </location>
    <ligand>
        <name>NADPH</name>
        <dbReference type="ChEBI" id="CHEBI:57783"/>
    </ligand>
</feature>
<feature type="binding site" evidence="1">
    <location>
        <position position="112"/>
    </location>
    <ligand>
        <name>1-deoxy-D-xylulose 5-phosphate</name>
        <dbReference type="ChEBI" id="CHEBI:57792"/>
    </ligand>
</feature>
<feature type="binding site" evidence="1">
    <location>
        <position position="113"/>
    </location>
    <ligand>
        <name>NADPH</name>
        <dbReference type="ChEBI" id="CHEBI:57783"/>
    </ligand>
</feature>
<feature type="binding site" evidence="1">
    <location>
        <position position="131"/>
    </location>
    <ligand>
        <name>Mn(2+)</name>
        <dbReference type="ChEBI" id="CHEBI:29035"/>
    </ligand>
</feature>
<feature type="binding site" evidence="1">
    <location>
        <position position="132"/>
    </location>
    <ligand>
        <name>1-deoxy-D-xylulose 5-phosphate</name>
        <dbReference type="ChEBI" id="CHEBI:57792"/>
    </ligand>
</feature>
<feature type="binding site" evidence="1">
    <location>
        <position position="133"/>
    </location>
    <ligand>
        <name>1-deoxy-D-xylulose 5-phosphate</name>
        <dbReference type="ChEBI" id="CHEBI:57792"/>
    </ligand>
</feature>
<feature type="binding site" evidence="1">
    <location>
        <position position="133"/>
    </location>
    <ligand>
        <name>Mn(2+)</name>
        <dbReference type="ChEBI" id="CHEBI:29035"/>
    </ligand>
</feature>
<feature type="binding site" evidence="1">
    <location>
        <position position="155"/>
    </location>
    <ligand>
        <name>1-deoxy-D-xylulose 5-phosphate</name>
        <dbReference type="ChEBI" id="CHEBI:57792"/>
    </ligand>
</feature>
<feature type="binding site" evidence="1">
    <location>
        <position position="178"/>
    </location>
    <ligand>
        <name>1-deoxy-D-xylulose 5-phosphate</name>
        <dbReference type="ChEBI" id="CHEBI:57792"/>
    </ligand>
</feature>
<feature type="binding site" evidence="1">
    <location>
        <position position="184"/>
    </location>
    <ligand>
        <name>NADPH</name>
        <dbReference type="ChEBI" id="CHEBI:57783"/>
    </ligand>
</feature>
<feature type="binding site" evidence="1">
    <location>
        <position position="191"/>
    </location>
    <ligand>
        <name>1-deoxy-D-xylulose 5-phosphate</name>
        <dbReference type="ChEBI" id="CHEBI:57792"/>
    </ligand>
</feature>
<feature type="binding site" evidence="1">
    <location>
        <position position="196"/>
    </location>
    <ligand>
        <name>1-deoxy-D-xylulose 5-phosphate</name>
        <dbReference type="ChEBI" id="CHEBI:57792"/>
    </ligand>
</feature>
<feature type="binding site" evidence="1">
    <location>
        <position position="197"/>
    </location>
    <ligand>
        <name>1-deoxy-D-xylulose 5-phosphate</name>
        <dbReference type="ChEBI" id="CHEBI:57792"/>
    </ligand>
</feature>
<feature type="binding site" evidence="1">
    <location>
        <position position="200"/>
    </location>
    <ligand>
        <name>1-deoxy-D-xylulose 5-phosphate</name>
        <dbReference type="ChEBI" id="CHEBI:57792"/>
    </ligand>
</feature>
<feature type="binding site" evidence="1">
    <location>
        <position position="200"/>
    </location>
    <ligand>
        <name>Mn(2+)</name>
        <dbReference type="ChEBI" id="CHEBI:29035"/>
    </ligand>
</feature>
<dbReference type="EC" id="1.1.1.267" evidence="1"/>
<dbReference type="EMBL" id="CP000814">
    <property type="protein sequence ID" value="ABV52861.1"/>
    <property type="molecule type" value="Genomic_DNA"/>
</dbReference>
<dbReference type="RefSeq" id="WP_002866764.1">
    <property type="nucleotide sequence ID" value="NC_009839.1"/>
</dbReference>
<dbReference type="SMR" id="A8FN24"/>
<dbReference type="KEGG" id="cju:C8J_1262"/>
<dbReference type="HOGENOM" id="CLU_035714_0_0_7"/>
<dbReference type="UniPathway" id="UPA00056">
    <property type="reaction ID" value="UER00092"/>
</dbReference>
<dbReference type="GO" id="GO:0030604">
    <property type="term" value="F:1-deoxy-D-xylulose-5-phosphate reductoisomerase activity"/>
    <property type="evidence" value="ECO:0007669"/>
    <property type="project" value="UniProtKB-UniRule"/>
</dbReference>
<dbReference type="GO" id="GO:0030145">
    <property type="term" value="F:manganese ion binding"/>
    <property type="evidence" value="ECO:0007669"/>
    <property type="project" value="TreeGrafter"/>
</dbReference>
<dbReference type="GO" id="GO:0070402">
    <property type="term" value="F:NADPH binding"/>
    <property type="evidence" value="ECO:0007669"/>
    <property type="project" value="InterPro"/>
</dbReference>
<dbReference type="GO" id="GO:0051484">
    <property type="term" value="P:isopentenyl diphosphate biosynthetic process, methylerythritol 4-phosphate pathway involved in terpenoid biosynthetic process"/>
    <property type="evidence" value="ECO:0007669"/>
    <property type="project" value="TreeGrafter"/>
</dbReference>
<dbReference type="Gene3D" id="1.10.1740.10">
    <property type="match status" value="1"/>
</dbReference>
<dbReference type="Gene3D" id="3.40.50.720">
    <property type="entry name" value="NAD(P)-binding Rossmann-like Domain"/>
    <property type="match status" value="1"/>
</dbReference>
<dbReference type="HAMAP" id="MF_00183">
    <property type="entry name" value="DXP_reductoisom"/>
    <property type="match status" value="1"/>
</dbReference>
<dbReference type="InterPro" id="IPR003821">
    <property type="entry name" value="DXP_reductoisomerase"/>
</dbReference>
<dbReference type="InterPro" id="IPR013644">
    <property type="entry name" value="DXP_reductoisomerase_C"/>
</dbReference>
<dbReference type="InterPro" id="IPR013512">
    <property type="entry name" value="DXP_reductoisomerase_N"/>
</dbReference>
<dbReference type="InterPro" id="IPR026877">
    <property type="entry name" value="DXPR_C"/>
</dbReference>
<dbReference type="InterPro" id="IPR036169">
    <property type="entry name" value="DXPR_C_sf"/>
</dbReference>
<dbReference type="InterPro" id="IPR036291">
    <property type="entry name" value="NAD(P)-bd_dom_sf"/>
</dbReference>
<dbReference type="NCBIfam" id="TIGR00243">
    <property type="entry name" value="Dxr"/>
    <property type="match status" value="1"/>
</dbReference>
<dbReference type="PANTHER" id="PTHR30525">
    <property type="entry name" value="1-DEOXY-D-XYLULOSE 5-PHOSPHATE REDUCTOISOMERASE"/>
    <property type="match status" value="1"/>
</dbReference>
<dbReference type="PANTHER" id="PTHR30525:SF0">
    <property type="entry name" value="1-DEOXY-D-XYLULOSE 5-PHOSPHATE REDUCTOISOMERASE, CHLOROPLASTIC"/>
    <property type="match status" value="1"/>
</dbReference>
<dbReference type="Pfam" id="PF08436">
    <property type="entry name" value="DXP_redisom_C"/>
    <property type="match status" value="1"/>
</dbReference>
<dbReference type="Pfam" id="PF02670">
    <property type="entry name" value="DXP_reductoisom"/>
    <property type="match status" value="1"/>
</dbReference>
<dbReference type="Pfam" id="PF13288">
    <property type="entry name" value="DXPR_C"/>
    <property type="match status" value="1"/>
</dbReference>
<dbReference type="PIRSF" id="PIRSF006205">
    <property type="entry name" value="Dxp_reductismrs"/>
    <property type="match status" value="1"/>
</dbReference>
<dbReference type="SUPFAM" id="SSF69055">
    <property type="entry name" value="1-deoxy-D-xylulose-5-phosphate reductoisomerase, C-terminal domain"/>
    <property type="match status" value="1"/>
</dbReference>
<dbReference type="SUPFAM" id="SSF55347">
    <property type="entry name" value="Glyceraldehyde-3-phosphate dehydrogenase-like, C-terminal domain"/>
    <property type="match status" value="1"/>
</dbReference>
<dbReference type="SUPFAM" id="SSF51735">
    <property type="entry name" value="NAD(P)-binding Rossmann-fold domains"/>
    <property type="match status" value="1"/>
</dbReference>
<reference key="1">
    <citation type="journal article" date="2007" name="J. Bacteriol.">
        <title>The complete genome sequence of Campylobacter jejuni strain 81116 (NCTC11828).</title>
        <authorList>
            <person name="Pearson B.M."/>
            <person name="Gaskin D.J.H."/>
            <person name="Segers R.P.A.M."/>
            <person name="Wells J.M."/>
            <person name="Nuijten P.J.M."/>
            <person name="van Vliet A.H.M."/>
        </authorList>
    </citation>
    <scope>NUCLEOTIDE SEQUENCE [LARGE SCALE GENOMIC DNA]</scope>
    <source>
        <strain>81116 / NCTC 11828</strain>
    </source>
</reference>
<gene>
    <name evidence="1" type="primary">dxr</name>
    <name type="ordered locus">C8J_1262</name>
</gene>
<organism>
    <name type="scientific">Campylobacter jejuni subsp. jejuni serotype O:6 (strain 81116 / NCTC 11828)</name>
    <dbReference type="NCBI Taxonomy" id="407148"/>
    <lineage>
        <taxon>Bacteria</taxon>
        <taxon>Pseudomonadati</taxon>
        <taxon>Campylobacterota</taxon>
        <taxon>Epsilonproteobacteria</taxon>
        <taxon>Campylobacterales</taxon>
        <taxon>Campylobacteraceae</taxon>
        <taxon>Campylobacter</taxon>
    </lineage>
</organism>
<sequence>MILFGSTGSIGVNALKLAALKNIPISALACGDNIALLNEQIARFKPKFVAIKDSKNKHLVKHDRVFIGQEGLEQILTECQDKLLFNAIVGFAGLKSTLKAKELGKNIALANKESLVVAGSFLKGVKFLPVDSEHAALKFLLEGKKNIAKLYITASGGAFYRYKIKDLNQVSVKDALKHPNWNMGAKITIDSATMANKLFEIIEAYHLYDFKEIDALIEPRSLVHAMCEFKNGASTAYFSKADMKLAISDAIFEKQDTPILEAVDFSKMPALKFHPISTKKYPIFKLKNTFLKEPNLGVIINAANEVGVYNFLENKSGFLDIAKCIFKALDHFGVPKISSIEEVFEYDFKTREYLRS</sequence>
<name>DXR_CAMJ8</name>
<protein>
    <recommendedName>
        <fullName evidence="1">1-deoxy-D-xylulose 5-phosphate reductoisomerase</fullName>
        <shortName evidence="1">DXP reductoisomerase</shortName>
        <ecNumber evidence="1">1.1.1.267</ecNumber>
    </recommendedName>
    <alternativeName>
        <fullName evidence="1">1-deoxyxylulose-5-phosphate reductoisomerase</fullName>
    </alternativeName>
    <alternativeName>
        <fullName evidence="1">2-C-methyl-D-erythritol 4-phosphate synthase</fullName>
    </alternativeName>
</protein>
<keyword id="KW-0414">Isoprene biosynthesis</keyword>
<keyword id="KW-0464">Manganese</keyword>
<keyword id="KW-0479">Metal-binding</keyword>
<keyword id="KW-0521">NADP</keyword>
<keyword id="KW-0560">Oxidoreductase</keyword>